<reference key="1">
    <citation type="journal article" date="2004" name="Nature">
        <title>Genesis of a highly pathogenic and potentially pandemic H5N1 influenza virus in eastern Asia.</title>
        <authorList>
            <person name="Li K.S."/>
            <person name="Guan Y."/>
            <person name="Wang J."/>
            <person name="Smith G.J.D."/>
            <person name="Xu K.M."/>
            <person name="Duan L."/>
            <person name="Rahardjo A.P."/>
            <person name="Puthavathana P."/>
            <person name="Buranathai C."/>
            <person name="Nguyen T.D."/>
            <person name="Estoepangestie A.T.S."/>
            <person name="Chaisingh A."/>
            <person name="Auewarakul P."/>
            <person name="Long H.T."/>
            <person name="Hanh N.T.H."/>
            <person name="Webby R.J."/>
            <person name="Poon L.L.M."/>
            <person name="Chen H."/>
            <person name="Shortridge K.F."/>
            <person name="Yuen K.Y."/>
            <person name="Webster R.G."/>
            <person name="Peiris J.S.M."/>
        </authorList>
    </citation>
    <scope>NUCLEOTIDE SEQUENCE [GENOMIC RNA]</scope>
</reference>
<feature type="chain" id="PRO_0000310942" description="Neuraminidase">
    <location>
        <begin position="1"/>
        <end position="449"/>
    </location>
</feature>
<feature type="topological domain" description="Intravirion" evidence="1">
    <location>
        <begin position="1"/>
        <end position="6"/>
    </location>
</feature>
<feature type="transmembrane region" description="Helical" evidence="1">
    <location>
        <begin position="7"/>
        <end position="27"/>
    </location>
</feature>
<feature type="topological domain" description="Virion surface" evidence="1">
    <location>
        <begin position="28"/>
        <end position="449"/>
    </location>
</feature>
<feature type="region of interest" description="Involved in apical transport and lipid raft association" evidence="1">
    <location>
        <begin position="11"/>
        <end position="33"/>
    </location>
</feature>
<feature type="region of interest" description="Hypervariable stalk region" evidence="1">
    <location>
        <begin position="36"/>
        <end position="70"/>
    </location>
</feature>
<feature type="region of interest" description="Head of neuraminidase" evidence="1">
    <location>
        <begin position="71"/>
        <end position="449"/>
    </location>
</feature>
<feature type="active site" description="Proton donor/acceptor" evidence="1">
    <location>
        <position position="131"/>
    </location>
</feature>
<feature type="active site" description="Nucleophile" evidence="1">
    <location>
        <position position="382"/>
    </location>
</feature>
<feature type="binding site" evidence="1">
    <location>
        <position position="98"/>
    </location>
    <ligand>
        <name>substrate</name>
    </ligand>
</feature>
<feature type="binding site" evidence="1">
    <location>
        <position position="132"/>
    </location>
    <ligand>
        <name>substrate</name>
    </ligand>
</feature>
<feature type="binding site" evidence="1">
    <location>
        <begin position="257"/>
        <end position="258"/>
    </location>
    <ligand>
        <name>substrate</name>
    </ligand>
</feature>
<feature type="binding site" evidence="1">
    <location>
        <position position="273"/>
    </location>
    <ligand>
        <name>substrate</name>
    </ligand>
</feature>
<feature type="binding site" evidence="1">
    <location>
        <position position="274"/>
    </location>
    <ligand>
        <name>Ca(2+)</name>
        <dbReference type="ChEBI" id="CHEBI:29108"/>
    </ligand>
</feature>
<feature type="binding site" evidence="1">
    <location>
        <position position="278"/>
    </location>
    <ligand>
        <name>Ca(2+)</name>
        <dbReference type="ChEBI" id="CHEBI:29108"/>
    </ligand>
</feature>
<feature type="binding site" evidence="1">
    <location>
        <position position="304"/>
    </location>
    <ligand>
        <name>Ca(2+)</name>
        <dbReference type="ChEBI" id="CHEBI:29108"/>
    </ligand>
</feature>
<feature type="binding site" evidence="1">
    <location>
        <position position="348"/>
    </location>
    <ligand>
        <name>substrate</name>
    </ligand>
</feature>
<feature type="glycosylation site" description="N-linked (GlcNAc...) asparagine; by host" evidence="1">
    <location>
        <position position="68"/>
    </location>
</feature>
<feature type="glycosylation site" description="N-linked (GlcNAc...) asparagine; by host" evidence="1">
    <location>
        <position position="126"/>
    </location>
</feature>
<feature type="glycosylation site" description="N-linked (GlcNAc...) asparagine; by host" evidence="1">
    <location>
        <position position="215"/>
    </location>
</feature>
<feature type="disulfide bond" evidence="1">
    <location>
        <begin position="72"/>
        <end position="397"/>
    </location>
</feature>
<feature type="disulfide bond" evidence="1">
    <location>
        <begin position="104"/>
        <end position="109"/>
    </location>
</feature>
<feature type="disulfide bond" evidence="1">
    <location>
        <begin position="164"/>
        <end position="211"/>
    </location>
</feature>
<feature type="disulfide bond" evidence="1">
    <location>
        <begin position="213"/>
        <end position="218"/>
    </location>
</feature>
<feature type="disulfide bond" evidence="1">
    <location>
        <begin position="259"/>
        <end position="272"/>
    </location>
</feature>
<feature type="disulfide bond" evidence="1">
    <location>
        <begin position="261"/>
        <end position="270"/>
    </location>
</feature>
<feature type="disulfide bond" evidence="1">
    <location>
        <begin position="298"/>
        <end position="315"/>
    </location>
</feature>
<feature type="disulfide bond" evidence="1">
    <location>
        <begin position="401"/>
        <end position="426"/>
    </location>
</feature>
<organismHost>
    <name type="scientific">Aves</name>
    <dbReference type="NCBI Taxonomy" id="8782"/>
</organismHost>
<organismHost>
    <name type="scientific">Felis catus</name>
    <name type="common">Cat</name>
    <name type="synonym">Felis silvestris catus</name>
    <dbReference type="NCBI Taxonomy" id="9685"/>
</organismHost>
<organismHost>
    <name type="scientific">Homo sapiens</name>
    <name type="common">Human</name>
    <dbReference type="NCBI Taxonomy" id="9606"/>
</organismHost>
<organismHost>
    <name type="scientific">Panthera pardus</name>
    <name type="common">Leopard</name>
    <name type="synonym">Felis pardus</name>
    <dbReference type="NCBI Taxonomy" id="9691"/>
</organismHost>
<organismHost>
    <name type="scientific">Panthera tigris</name>
    <name type="common">Tiger</name>
    <dbReference type="NCBI Taxonomy" id="9694"/>
</organismHost>
<organismHost>
    <name type="scientific">Sus scrofa</name>
    <name type="common">Pig</name>
    <dbReference type="NCBI Taxonomy" id="9823"/>
</organismHost>
<comment type="function">
    <text evidence="1">Catalyzes the removal of terminal sialic acid residues from viral and cellular glycoconjugates. Cleaves off the terminal sialic acids on the glycosylated HA during virus budding to facilitate virus release. Additionally helps virus spread through the circulation by further removing sialic acids from the cell surface. These cleavages prevent self-aggregation and ensure the efficient spread of the progeny virus from cell to cell. Otherwise, infection would be limited to one round of replication. Described as a receptor-destroying enzyme because it cleaves a terminal sialic acid from the cellular receptors. May facilitate viral invasion of the upper airways by cleaving the sialic acid moieties on the mucin of the airway epithelial cells. Likely to plays a role in the budding process through its association with lipid rafts during intracellular transport. May additionally display a raft-association independent effect on budding. Plays a role in the determination of host range restriction on replication and virulence. Sialidase activity in late endosome/lysosome traffic seems to enhance virus replication.</text>
</comment>
<comment type="catalytic activity">
    <reaction evidence="1">
        <text>Hydrolysis of alpha-(2-&gt;3)-, alpha-(2-&gt;6)-, alpha-(2-&gt;8)- glycosidic linkages of terminal sialic acid residues in oligosaccharides, glycoproteins, glycolipids, colominic acid and synthetic substrates.</text>
        <dbReference type="EC" id="3.2.1.18"/>
    </reaction>
</comment>
<comment type="cofactor">
    <cofactor evidence="1">
        <name>Ca(2+)</name>
        <dbReference type="ChEBI" id="CHEBI:29108"/>
    </cofactor>
</comment>
<comment type="activity regulation">
    <text evidence="1">Inhibited by the neuraminidase inhibitors zanamivir (Relenza) and oseltamivir (Tamiflu). These drugs interfere with the release of progeny virus from infected cells and are effective against all influenza strains. Resistance to neuraminidase inhibitors is quite rare.</text>
</comment>
<comment type="subunit">
    <text evidence="1">Homotetramer.</text>
</comment>
<comment type="subcellular location">
    <subcellularLocation>
        <location evidence="1">Virion membrane</location>
    </subcellularLocation>
    <subcellularLocation>
        <location evidence="1">Host apical cell membrane</location>
        <topology evidence="1">Single-pass type II membrane protein</topology>
    </subcellularLocation>
    <text evidence="1">Preferentially accumulates at the apical plasma membrane in infected polarized epithelial cells, which is the virus assembly site. Uses lipid rafts for cell surface transport and apical sorting. In the virion, forms a mushroom-shaped spike on the surface of the membrane.</text>
</comment>
<comment type="domain">
    <text evidence="1">Intact N-terminus is essential for virion morphogenesis. Possesses two apical sorting signals, one in the ectodomain, which is likely to be a glycan, and the other in the transmembrane domain. The transmembrane domain also plays a role in lipid raft association.</text>
</comment>
<comment type="PTM">
    <text evidence="1">N-glycosylated.</text>
</comment>
<comment type="miscellaneous">
    <text>The influenza A genome consist of 8 RNA segments. Genetic variation of hemagglutinin and/or neuraminidase genes results in the emergence of new influenza strains. The mechanism of variation can be the result of point mutations or the result of genetic reassortment between segments of two different strains.</text>
</comment>
<comment type="similarity">
    <text evidence="1">Belongs to the glycosyl hydrolase 34 family.</text>
</comment>
<organism>
    <name type="scientific">Influenza A virus (strain A/Chicken/Shantou/4231/2003 H5N1 genotype V)</name>
    <dbReference type="NCBI Taxonomy" id="284184"/>
    <lineage>
        <taxon>Viruses</taxon>
        <taxon>Riboviria</taxon>
        <taxon>Orthornavirae</taxon>
        <taxon>Negarnaviricota</taxon>
        <taxon>Polyploviricotina</taxon>
        <taxon>Insthoviricetes</taxon>
        <taxon>Articulavirales</taxon>
        <taxon>Orthomyxoviridae</taxon>
        <taxon>Alphainfluenzavirus</taxon>
        <taxon>Alphainfluenzavirus influenzae</taxon>
        <taxon>Influenza A virus</taxon>
    </lineage>
</organism>
<name>NRAM_I03A1</name>
<gene>
    <name evidence="1" type="primary">NA</name>
</gene>
<accession>Q6DPH9</accession>
<keyword id="KW-0106">Calcium</keyword>
<keyword id="KW-1015">Disulfide bond</keyword>
<keyword id="KW-0325">Glycoprotein</keyword>
<keyword id="KW-0326">Glycosidase</keyword>
<keyword id="KW-1032">Host cell membrane</keyword>
<keyword id="KW-1043">Host membrane</keyword>
<keyword id="KW-0378">Hydrolase</keyword>
<keyword id="KW-0472">Membrane</keyword>
<keyword id="KW-0479">Metal-binding</keyword>
<keyword id="KW-0735">Signal-anchor</keyword>
<keyword id="KW-0812">Transmembrane</keyword>
<keyword id="KW-1133">Transmembrane helix</keyword>
<keyword id="KW-0946">Virion</keyword>
<evidence type="ECO:0000255" key="1">
    <source>
        <dbReference type="HAMAP-Rule" id="MF_04071"/>
    </source>
</evidence>
<dbReference type="EC" id="3.2.1.18" evidence="1"/>
<dbReference type="EMBL" id="AY651480">
    <property type="protein sequence ID" value="AAT73362.1"/>
    <property type="molecule type" value="Genomic_RNA"/>
</dbReference>
<dbReference type="SMR" id="Q6DPH9"/>
<dbReference type="CAZy" id="GH34">
    <property type="family name" value="Glycoside Hydrolase Family 34"/>
</dbReference>
<dbReference type="GlyCosmos" id="Q6DPH9">
    <property type="glycosylation" value="3 sites, No reported glycans"/>
</dbReference>
<dbReference type="GO" id="GO:0020002">
    <property type="term" value="C:host cell plasma membrane"/>
    <property type="evidence" value="ECO:0007669"/>
    <property type="project" value="UniProtKB-SubCell"/>
</dbReference>
<dbReference type="GO" id="GO:0016020">
    <property type="term" value="C:membrane"/>
    <property type="evidence" value="ECO:0007669"/>
    <property type="project" value="UniProtKB-UniRule"/>
</dbReference>
<dbReference type="GO" id="GO:0055036">
    <property type="term" value="C:virion membrane"/>
    <property type="evidence" value="ECO:0007669"/>
    <property type="project" value="UniProtKB-SubCell"/>
</dbReference>
<dbReference type="GO" id="GO:0004308">
    <property type="term" value="F:exo-alpha-sialidase activity"/>
    <property type="evidence" value="ECO:0007669"/>
    <property type="project" value="UniProtKB-UniRule"/>
</dbReference>
<dbReference type="GO" id="GO:0046872">
    <property type="term" value="F:metal ion binding"/>
    <property type="evidence" value="ECO:0007669"/>
    <property type="project" value="UniProtKB-UniRule"/>
</dbReference>
<dbReference type="GO" id="GO:0005975">
    <property type="term" value="P:carbohydrate metabolic process"/>
    <property type="evidence" value="ECO:0007669"/>
    <property type="project" value="InterPro"/>
</dbReference>
<dbReference type="GO" id="GO:0046761">
    <property type="term" value="P:viral budding from plasma membrane"/>
    <property type="evidence" value="ECO:0007669"/>
    <property type="project" value="UniProtKB-UniRule"/>
</dbReference>
<dbReference type="CDD" id="cd15483">
    <property type="entry name" value="Influenza_NA"/>
    <property type="match status" value="1"/>
</dbReference>
<dbReference type="FunFam" id="2.120.10.10:FF:000001">
    <property type="entry name" value="Neuraminidase"/>
    <property type="match status" value="1"/>
</dbReference>
<dbReference type="Gene3D" id="2.120.10.10">
    <property type="match status" value="1"/>
</dbReference>
<dbReference type="HAMAP" id="MF_04071">
    <property type="entry name" value="INFV_NRAM"/>
    <property type="match status" value="1"/>
</dbReference>
<dbReference type="InterPro" id="IPR001860">
    <property type="entry name" value="Glyco_hydro_34"/>
</dbReference>
<dbReference type="InterPro" id="IPR033654">
    <property type="entry name" value="Sialidase_Influenza_A/B"/>
</dbReference>
<dbReference type="InterPro" id="IPR036278">
    <property type="entry name" value="Sialidase_sf"/>
</dbReference>
<dbReference type="Pfam" id="PF00064">
    <property type="entry name" value="Neur"/>
    <property type="match status" value="1"/>
</dbReference>
<dbReference type="SUPFAM" id="SSF50939">
    <property type="entry name" value="Sialidases"/>
    <property type="match status" value="1"/>
</dbReference>
<protein>
    <recommendedName>
        <fullName evidence="1">Neuraminidase</fullName>
        <ecNumber evidence="1">3.2.1.18</ecNumber>
    </recommendedName>
</protein>
<sequence length="449" mass="48936">MNPNQKIIAIGSICMVIGIVSLMLQIGNMISIWISHSIQTGNQRQAEPISNTKVLNEKAVASVTLAGNSSLCPISGWAVHSKDNSIRIGSKGDVFVIREPFISCSHLECRTFFLTQGALLNDKHSNGTVKDRSPHRTLMSCPVGEAPSPYNSRFESVAWSASACHDGTSWLTIGISGPDNGAVAVLKYNGIITDTIKSWRNNILRTQESECACVNGSCFTVMTDGPSNGQASYKIFKMEKGKVVKSVELDAPNYHYEECSCYPDAGEITCVCRDNWHGSNRPWVSFNQNLEYQIGYICSGVFGDNPRPNDGTGSCGPVSPNGAYGVKGFSFKYGNGVWIGRTKSTNSRSGFEMIWDPNGWTGTDSSFSVKQDIVAITDWSGYSGSFVQHPELTGLDCIRPCFWVELIRGRPKESTIWTSGSSISFCGVDSDTVGWSWPDGAELPFTIDK</sequence>
<proteinExistence type="inferred from homology"/>